<gene>
    <name type="ordered locus">BQ2027_MB3793C</name>
</gene>
<feature type="chain" id="PRO_0000361135" description="Putative S-adenosyl-L-methionine-dependent methyltransferase Mb3793c">
    <location>
        <begin position="1"/>
        <end position="314"/>
    </location>
</feature>
<feature type="binding site" evidence="1">
    <location>
        <position position="132"/>
    </location>
    <ligand>
        <name>S-adenosyl-L-methionine</name>
        <dbReference type="ChEBI" id="CHEBI:59789"/>
    </ligand>
</feature>
<feature type="binding site" evidence="1">
    <location>
        <begin position="161"/>
        <end position="162"/>
    </location>
    <ligand>
        <name>S-adenosyl-L-methionine</name>
        <dbReference type="ChEBI" id="CHEBI:59789"/>
    </ligand>
</feature>
<dbReference type="EC" id="2.1.1.-"/>
<dbReference type="EMBL" id="LT708304">
    <property type="protein sequence ID" value="SIU02422.1"/>
    <property type="molecule type" value="Genomic_DNA"/>
</dbReference>
<dbReference type="RefSeq" id="NP_857430.1">
    <property type="nucleotide sequence ID" value="NC_002945.3"/>
</dbReference>
<dbReference type="RefSeq" id="WP_003420557.1">
    <property type="nucleotide sequence ID" value="NC_002945.4"/>
</dbReference>
<dbReference type="SMR" id="Q7TVQ7"/>
<dbReference type="KEGG" id="mbo:BQ2027_MB3793C"/>
<dbReference type="PATRIC" id="fig|233413.5.peg.4149"/>
<dbReference type="Proteomes" id="UP000001419">
    <property type="component" value="Chromosome"/>
</dbReference>
<dbReference type="GO" id="GO:0008168">
    <property type="term" value="F:methyltransferase activity"/>
    <property type="evidence" value="ECO:0007669"/>
    <property type="project" value="UniProtKB-KW"/>
</dbReference>
<dbReference type="GO" id="GO:0032259">
    <property type="term" value="P:methylation"/>
    <property type="evidence" value="ECO:0007669"/>
    <property type="project" value="UniProtKB-KW"/>
</dbReference>
<dbReference type="FunFam" id="3.40.50.150:FF:000152">
    <property type="entry name" value="S-adenosyl-L-methionine-dependent methyltransferase"/>
    <property type="match status" value="1"/>
</dbReference>
<dbReference type="Gene3D" id="3.40.50.150">
    <property type="entry name" value="Vaccinia Virus protein VP39"/>
    <property type="match status" value="1"/>
</dbReference>
<dbReference type="InterPro" id="IPR007213">
    <property type="entry name" value="Ppm1/Ppm2/Tcmp"/>
</dbReference>
<dbReference type="InterPro" id="IPR029063">
    <property type="entry name" value="SAM-dependent_MTases_sf"/>
</dbReference>
<dbReference type="InterPro" id="IPR011610">
    <property type="entry name" value="SAM_mthyl_Trfase_ML2640-like"/>
</dbReference>
<dbReference type="NCBIfam" id="TIGR00027">
    <property type="entry name" value="mthyl_TIGR00027"/>
    <property type="match status" value="1"/>
</dbReference>
<dbReference type="PANTHER" id="PTHR43619">
    <property type="entry name" value="S-ADENOSYL-L-METHIONINE-DEPENDENT METHYLTRANSFERASE YKTD-RELATED"/>
    <property type="match status" value="1"/>
</dbReference>
<dbReference type="PANTHER" id="PTHR43619:SF2">
    <property type="entry name" value="S-ADENOSYL-L-METHIONINE-DEPENDENT METHYLTRANSFERASES SUPERFAMILY PROTEIN"/>
    <property type="match status" value="1"/>
</dbReference>
<dbReference type="Pfam" id="PF04072">
    <property type="entry name" value="LCM"/>
    <property type="match status" value="1"/>
</dbReference>
<dbReference type="SUPFAM" id="SSF53335">
    <property type="entry name" value="S-adenosyl-L-methionine-dependent methyltransferases"/>
    <property type="match status" value="1"/>
</dbReference>
<name>Y3793_MYCBO</name>
<organism>
    <name type="scientific">Mycobacterium bovis (strain ATCC BAA-935 / AF2122/97)</name>
    <dbReference type="NCBI Taxonomy" id="233413"/>
    <lineage>
        <taxon>Bacteria</taxon>
        <taxon>Bacillati</taxon>
        <taxon>Actinomycetota</taxon>
        <taxon>Actinomycetes</taxon>
        <taxon>Mycobacteriales</taxon>
        <taxon>Mycobacteriaceae</taxon>
        <taxon>Mycobacterium</taxon>
        <taxon>Mycobacterium tuberculosis complex</taxon>
    </lineage>
</organism>
<keyword id="KW-0489">Methyltransferase</keyword>
<keyword id="KW-1185">Reference proteome</keyword>
<keyword id="KW-0949">S-adenosyl-L-methionine</keyword>
<keyword id="KW-0808">Transferase</keyword>
<protein>
    <recommendedName>
        <fullName>Putative S-adenosyl-L-methionine-dependent methyltransferase Mb3793c</fullName>
        <ecNumber>2.1.1.-</ecNumber>
    </recommendedName>
</protein>
<proteinExistence type="inferred from homology"/>
<comment type="function">
    <text evidence="1">Exhibits S-adenosyl-L-methionine-dependent methyltransferase activity.</text>
</comment>
<comment type="similarity">
    <text evidence="2">Belongs to the UPF0677 family.</text>
</comment>
<reference key="1">
    <citation type="journal article" date="2003" name="Proc. Natl. Acad. Sci. U.S.A.">
        <title>The complete genome sequence of Mycobacterium bovis.</title>
        <authorList>
            <person name="Garnier T."/>
            <person name="Eiglmeier K."/>
            <person name="Camus J.-C."/>
            <person name="Medina N."/>
            <person name="Mansoor H."/>
            <person name="Pryor M."/>
            <person name="Duthoy S."/>
            <person name="Grondin S."/>
            <person name="Lacroix C."/>
            <person name="Monsempe C."/>
            <person name="Simon S."/>
            <person name="Harris B."/>
            <person name="Atkin R."/>
            <person name="Doggett J."/>
            <person name="Mayes R."/>
            <person name="Keating L."/>
            <person name="Wheeler P.R."/>
            <person name="Parkhill J."/>
            <person name="Barrell B.G."/>
            <person name="Cole S.T."/>
            <person name="Gordon S.V."/>
            <person name="Hewinson R.G."/>
        </authorList>
    </citation>
    <scope>NUCLEOTIDE SEQUENCE [LARGE SCALE GENOMIC DNA]</scope>
    <source>
        <strain>ATCC BAA-935 / AF2122/97</strain>
    </source>
</reference>
<reference key="2">
    <citation type="journal article" date="2017" name="Genome Announc.">
        <title>Updated reference genome sequence and annotation of Mycobacterium bovis AF2122/97.</title>
        <authorList>
            <person name="Malone K.M."/>
            <person name="Farrell D."/>
            <person name="Stuber T.P."/>
            <person name="Schubert O.T."/>
            <person name="Aebersold R."/>
            <person name="Robbe-Austerman S."/>
            <person name="Gordon S.V."/>
        </authorList>
    </citation>
    <scope>NUCLEOTIDE SEQUENCE [LARGE SCALE GENOMIC DNA]</scope>
    <scope>GENOME REANNOTATION</scope>
    <source>
        <strain>ATCC BAA-935 / AF2122/97</strain>
    </source>
</reference>
<evidence type="ECO:0000250" key="1"/>
<evidence type="ECO:0000305" key="2"/>
<accession>Q7TVQ7</accession>
<accession>A0A1R3Y563</accession>
<accession>X2BPS7</accession>
<sequence length="314" mass="34755">MPRTDNDSWAITESVGATALGVAAARAAETESDNPLINDPFARIFVDAAGDGIWSMYTNRTLLAGATDLDPDLRAPIQQMIDFMAARTAFFDEYFLATADAGVRQVVILASGLDSRAWRLPWPDGTVVYELDQPKVLEFKSATLRQHGAQPASQLVNVPIDLRQDWPKALQKAGFDPSKPCAWLAEGLVRYLPARAQDLLFERIDALSRPGSWLASNVPGAGFLDPERMRRQRADMRRMRAAAAKLVETEISDVDDLWYAEQRTAVAEWLRERGWDVSTATLPELLARYGRSIPHSGEDSIPPNLFVSAQRATS</sequence>